<dbReference type="EMBL" id="M19379">
    <property type="protein sequence ID" value="AAA33073.1"/>
    <property type="molecule type" value="mRNA"/>
</dbReference>
<dbReference type="EMBL" id="X13204">
    <property type="protein sequence ID" value="CAA31592.1"/>
    <property type="molecule type" value="Genomic_DNA"/>
</dbReference>
<dbReference type="PIR" id="S04042">
    <property type="entry name" value="S04042"/>
</dbReference>
<dbReference type="STRING" id="3635.P09442"/>
<dbReference type="PaxDb" id="3635-P09442"/>
<dbReference type="Proteomes" id="UP000189702">
    <property type="component" value="Unplaced"/>
</dbReference>
<dbReference type="GO" id="GO:0046872">
    <property type="term" value="F:metal ion binding"/>
    <property type="evidence" value="ECO:0007669"/>
    <property type="project" value="UniProtKB-ARBA"/>
</dbReference>
<dbReference type="GO" id="GO:0009631">
    <property type="term" value="P:cold acclimation"/>
    <property type="evidence" value="ECO:0000318"/>
    <property type="project" value="GO_Central"/>
</dbReference>
<dbReference type="GO" id="GO:0009737">
    <property type="term" value="P:response to abscisic acid"/>
    <property type="evidence" value="ECO:0000318"/>
    <property type="project" value="GO_Central"/>
</dbReference>
<dbReference type="GO" id="GO:0009414">
    <property type="term" value="P:response to water deprivation"/>
    <property type="evidence" value="ECO:0000318"/>
    <property type="project" value="GO_Central"/>
</dbReference>
<dbReference type="InterPro" id="IPR000167">
    <property type="entry name" value="Dehydrin"/>
</dbReference>
<dbReference type="InterPro" id="IPR030513">
    <property type="entry name" value="Dehydrin_CS"/>
</dbReference>
<dbReference type="PANTHER" id="PTHR33346:SF42">
    <property type="entry name" value="DEHYDRIN XERO 1"/>
    <property type="match status" value="1"/>
</dbReference>
<dbReference type="PANTHER" id="PTHR33346">
    <property type="entry name" value="DEHYDRIN XERO 2-RELATED"/>
    <property type="match status" value="1"/>
</dbReference>
<dbReference type="Pfam" id="PF00257">
    <property type="entry name" value="Dehydrin"/>
    <property type="match status" value="1"/>
</dbReference>
<dbReference type="PROSITE" id="PS00315">
    <property type="entry name" value="DEHYDRIN_1"/>
    <property type="match status" value="1"/>
</dbReference>
<dbReference type="PROSITE" id="PS00823">
    <property type="entry name" value="DEHYDRIN_2"/>
    <property type="match status" value="1"/>
</dbReference>
<protein>
    <recommendedName>
        <fullName>Late embryogenesis abundant protein D-11</fullName>
        <shortName>LEA D-11</shortName>
    </recommendedName>
</protein>
<sequence>MAHFQNQYSAPEVTQTDAYGNPTRRTDEYGNPIPTQETGRGILGIGGHHHGGHHGLHRTGSSSSSSSSSEDEGTGKKKKGLKERLKEKIPGNKEHQSQATSTTTPGQGPTYHQHHREERSDGQDQGEAPWSPQPLISCLWSAISY</sequence>
<organism>
    <name type="scientific">Gossypium hirsutum</name>
    <name type="common">Upland cotton</name>
    <name type="synonym">Gossypium mexicanum</name>
    <dbReference type="NCBI Taxonomy" id="3635"/>
    <lineage>
        <taxon>Eukaryota</taxon>
        <taxon>Viridiplantae</taxon>
        <taxon>Streptophyta</taxon>
        <taxon>Embryophyta</taxon>
        <taxon>Tracheophyta</taxon>
        <taxon>Spermatophyta</taxon>
        <taxon>Magnoliopsida</taxon>
        <taxon>eudicotyledons</taxon>
        <taxon>Gunneridae</taxon>
        <taxon>Pentapetalae</taxon>
        <taxon>rosids</taxon>
        <taxon>malvids</taxon>
        <taxon>Malvales</taxon>
        <taxon>Malvaceae</taxon>
        <taxon>Malvoideae</taxon>
        <taxon>Gossypium</taxon>
    </lineage>
</organism>
<reference key="1">
    <citation type="journal article" date="1988" name="Plant Mol. Biol.">
        <title>Sequence and characterization of 6 Lea proteins and their genes from cotton.</title>
        <authorList>
            <person name="Baker J."/>
            <person name="Steele C."/>
            <person name="Dure L. III"/>
        </authorList>
        <dbReference type="AGRICOLA" id="IND92000052"/>
    </citation>
    <scope>NUCLEOTIDE SEQUENCE</scope>
    <source>
        <strain>cv. Coker 201</strain>
        <tissue>Seed</tissue>
    </source>
</reference>
<name>DH11_GOSHI</name>
<proteinExistence type="evidence at transcript level"/>
<accession>P09442</accession>
<feature type="chain" id="PRO_0000100045" description="Late embryogenesis abundant protein D-11">
    <location>
        <begin position="1"/>
        <end position="145"/>
    </location>
</feature>
<feature type="region of interest" description="Disordered" evidence="1">
    <location>
        <begin position="1"/>
        <end position="136"/>
    </location>
</feature>
<feature type="compositionally biased region" description="Polar residues" evidence="1">
    <location>
        <begin position="1"/>
        <end position="18"/>
    </location>
</feature>
<feature type="compositionally biased region" description="Basic residues" evidence="1">
    <location>
        <begin position="47"/>
        <end position="57"/>
    </location>
</feature>
<feature type="compositionally biased region" description="Low complexity" evidence="1">
    <location>
        <begin position="58"/>
        <end position="68"/>
    </location>
</feature>
<feature type="compositionally biased region" description="Basic and acidic residues" evidence="1">
    <location>
        <begin position="82"/>
        <end position="96"/>
    </location>
</feature>
<feature type="compositionally biased region" description="Polar residues" evidence="1">
    <location>
        <begin position="97"/>
        <end position="107"/>
    </location>
</feature>
<keyword id="KW-1185">Reference proteome</keyword>
<keyword id="KW-0677">Repeat</keyword>
<evidence type="ECO:0000256" key="1">
    <source>
        <dbReference type="SAM" id="MobiDB-lite"/>
    </source>
</evidence>
<evidence type="ECO:0000305" key="2"/>
<comment type="function">
    <text>LEA protein are late embryogenesis abundant in higher plant seed embryos. There are two subsets of LEA proteins (5a, and 5b), the first ones are expressed when the cotyledon weight reach 80 mg and the second set are expressed above 100 mg. The function of those proteins is not known.</text>
</comment>
<comment type="miscellaneous">
    <text>This is a SET 5b protein.</text>
</comment>
<comment type="similarity">
    <text evidence="2">Belongs to the plant dehydrin family.</text>
</comment>